<protein>
    <recommendedName>
        <fullName>Kinesin-like protein KIF3C</fullName>
    </recommendedName>
</protein>
<organism>
    <name type="scientific">Mus musculus</name>
    <name type="common">Mouse</name>
    <dbReference type="NCBI Taxonomy" id="10090"/>
    <lineage>
        <taxon>Eukaryota</taxon>
        <taxon>Metazoa</taxon>
        <taxon>Chordata</taxon>
        <taxon>Craniata</taxon>
        <taxon>Vertebrata</taxon>
        <taxon>Euteleostomi</taxon>
        <taxon>Mammalia</taxon>
        <taxon>Eutheria</taxon>
        <taxon>Euarchontoglires</taxon>
        <taxon>Glires</taxon>
        <taxon>Rodentia</taxon>
        <taxon>Myomorpha</taxon>
        <taxon>Muroidea</taxon>
        <taxon>Muridae</taxon>
        <taxon>Murinae</taxon>
        <taxon>Mus</taxon>
        <taxon>Mus</taxon>
    </lineage>
</organism>
<reference key="1">
    <citation type="journal article" date="1998" name="Mol. Biol. Cell">
        <title>Characterization of the KIF3C neural kinesin-like motor from mouse.</title>
        <authorList>
            <person name="Yang Z."/>
            <person name="Goldstein L.S.B."/>
        </authorList>
    </citation>
    <scope>NUCLEOTIDE SEQUENCE [MRNA]</scope>
</reference>
<reference key="2">
    <citation type="journal article" date="2005" name="Science">
        <title>The transcriptional landscape of the mammalian genome.</title>
        <authorList>
            <person name="Carninci P."/>
            <person name="Kasukawa T."/>
            <person name="Katayama S."/>
            <person name="Gough J."/>
            <person name="Frith M.C."/>
            <person name="Maeda N."/>
            <person name="Oyama R."/>
            <person name="Ravasi T."/>
            <person name="Lenhard B."/>
            <person name="Wells C."/>
            <person name="Kodzius R."/>
            <person name="Shimokawa K."/>
            <person name="Bajic V.B."/>
            <person name="Brenner S.E."/>
            <person name="Batalov S."/>
            <person name="Forrest A.R."/>
            <person name="Zavolan M."/>
            <person name="Davis M.J."/>
            <person name="Wilming L.G."/>
            <person name="Aidinis V."/>
            <person name="Allen J.E."/>
            <person name="Ambesi-Impiombato A."/>
            <person name="Apweiler R."/>
            <person name="Aturaliya R.N."/>
            <person name="Bailey T.L."/>
            <person name="Bansal M."/>
            <person name="Baxter L."/>
            <person name="Beisel K.W."/>
            <person name="Bersano T."/>
            <person name="Bono H."/>
            <person name="Chalk A.M."/>
            <person name="Chiu K.P."/>
            <person name="Choudhary V."/>
            <person name="Christoffels A."/>
            <person name="Clutterbuck D.R."/>
            <person name="Crowe M.L."/>
            <person name="Dalla E."/>
            <person name="Dalrymple B.P."/>
            <person name="de Bono B."/>
            <person name="Della Gatta G."/>
            <person name="di Bernardo D."/>
            <person name="Down T."/>
            <person name="Engstrom P."/>
            <person name="Fagiolini M."/>
            <person name="Faulkner G."/>
            <person name="Fletcher C.F."/>
            <person name="Fukushima T."/>
            <person name="Furuno M."/>
            <person name="Futaki S."/>
            <person name="Gariboldi M."/>
            <person name="Georgii-Hemming P."/>
            <person name="Gingeras T.R."/>
            <person name="Gojobori T."/>
            <person name="Green R.E."/>
            <person name="Gustincich S."/>
            <person name="Harbers M."/>
            <person name="Hayashi Y."/>
            <person name="Hensch T.K."/>
            <person name="Hirokawa N."/>
            <person name="Hill D."/>
            <person name="Huminiecki L."/>
            <person name="Iacono M."/>
            <person name="Ikeo K."/>
            <person name="Iwama A."/>
            <person name="Ishikawa T."/>
            <person name="Jakt M."/>
            <person name="Kanapin A."/>
            <person name="Katoh M."/>
            <person name="Kawasawa Y."/>
            <person name="Kelso J."/>
            <person name="Kitamura H."/>
            <person name="Kitano H."/>
            <person name="Kollias G."/>
            <person name="Krishnan S.P."/>
            <person name="Kruger A."/>
            <person name="Kummerfeld S.K."/>
            <person name="Kurochkin I.V."/>
            <person name="Lareau L.F."/>
            <person name="Lazarevic D."/>
            <person name="Lipovich L."/>
            <person name="Liu J."/>
            <person name="Liuni S."/>
            <person name="McWilliam S."/>
            <person name="Madan Babu M."/>
            <person name="Madera M."/>
            <person name="Marchionni L."/>
            <person name="Matsuda H."/>
            <person name="Matsuzawa S."/>
            <person name="Miki H."/>
            <person name="Mignone F."/>
            <person name="Miyake S."/>
            <person name="Morris K."/>
            <person name="Mottagui-Tabar S."/>
            <person name="Mulder N."/>
            <person name="Nakano N."/>
            <person name="Nakauchi H."/>
            <person name="Ng P."/>
            <person name="Nilsson R."/>
            <person name="Nishiguchi S."/>
            <person name="Nishikawa S."/>
            <person name="Nori F."/>
            <person name="Ohara O."/>
            <person name="Okazaki Y."/>
            <person name="Orlando V."/>
            <person name="Pang K.C."/>
            <person name="Pavan W.J."/>
            <person name="Pavesi G."/>
            <person name="Pesole G."/>
            <person name="Petrovsky N."/>
            <person name="Piazza S."/>
            <person name="Reed J."/>
            <person name="Reid J.F."/>
            <person name="Ring B.Z."/>
            <person name="Ringwald M."/>
            <person name="Rost B."/>
            <person name="Ruan Y."/>
            <person name="Salzberg S.L."/>
            <person name="Sandelin A."/>
            <person name="Schneider C."/>
            <person name="Schoenbach C."/>
            <person name="Sekiguchi K."/>
            <person name="Semple C.A."/>
            <person name="Seno S."/>
            <person name="Sessa L."/>
            <person name="Sheng Y."/>
            <person name="Shibata Y."/>
            <person name="Shimada H."/>
            <person name="Shimada K."/>
            <person name="Silva D."/>
            <person name="Sinclair B."/>
            <person name="Sperling S."/>
            <person name="Stupka E."/>
            <person name="Sugiura K."/>
            <person name="Sultana R."/>
            <person name="Takenaka Y."/>
            <person name="Taki K."/>
            <person name="Tammoja K."/>
            <person name="Tan S.L."/>
            <person name="Tang S."/>
            <person name="Taylor M.S."/>
            <person name="Tegner J."/>
            <person name="Teichmann S.A."/>
            <person name="Ueda H.R."/>
            <person name="van Nimwegen E."/>
            <person name="Verardo R."/>
            <person name="Wei C.L."/>
            <person name="Yagi K."/>
            <person name="Yamanishi H."/>
            <person name="Zabarovsky E."/>
            <person name="Zhu S."/>
            <person name="Zimmer A."/>
            <person name="Hide W."/>
            <person name="Bult C."/>
            <person name="Grimmond S.M."/>
            <person name="Teasdale R.D."/>
            <person name="Liu E.T."/>
            <person name="Brusic V."/>
            <person name="Quackenbush J."/>
            <person name="Wahlestedt C."/>
            <person name="Mattick J.S."/>
            <person name="Hume D.A."/>
            <person name="Kai C."/>
            <person name="Sasaki D."/>
            <person name="Tomaru Y."/>
            <person name="Fukuda S."/>
            <person name="Kanamori-Katayama M."/>
            <person name="Suzuki M."/>
            <person name="Aoki J."/>
            <person name="Arakawa T."/>
            <person name="Iida J."/>
            <person name="Imamura K."/>
            <person name="Itoh M."/>
            <person name="Kato T."/>
            <person name="Kawaji H."/>
            <person name="Kawagashira N."/>
            <person name="Kawashima T."/>
            <person name="Kojima M."/>
            <person name="Kondo S."/>
            <person name="Konno H."/>
            <person name="Nakano K."/>
            <person name="Ninomiya N."/>
            <person name="Nishio T."/>
            <person name="Okada M."/>
            <person name="Plessy C."/>
            <person name="Shibata K."/>
            <person name="Shiraki T."/>
            <person name="Suzuki S."/>
            <person name="Tagami M."/>
            <person name="Waki K."/>
            <person name="Watahiki A."/>
            <person name="Okamura-Oho Y."/>
            <person name="Suzuki H."/>
            <person name="Kawai J."/>
            <person name="Hayashizaki Y."/>
        </authorList>
    </citation>
    <scope>NUCLEOTIDE SEQUENCE [LARGE SCALE MRNA]</scope>
    <source>
        <strain>C57BL/6J</strain>
        <tissue>Brain</tissue>
    </source>
</reference>
<reference key="3">
    <citation type="submission" date="2005-09" db="EMBL/GenBank/DDBJ databases">
        <authorList>
            <person name="Mural R.J."/>
            <person name="Adams M.D."/>
            <person name="Myers E.W."/>
            <person name="Smith H.O."/>
            <person name="Venter J.C."/>
        </authorList>
    </citation>
    <scope>NUCLEOTIDE SEQUENCE [LARGE SCALE GENOMIC DNA]</scope>
</reference>
<reference key="4">
    <citation type="journal article" date="2004" name="Genome Res.">
        <title>The status, quality, and expansion of the NIH full-length cDNA project: the Mammalian Gene Collection (MGC).</title>
        <authorList>
            <consortium name="The MGC Project Team"/>
        </authorList>
    </citation>
    <scope>NUCLEOTIDE SEQUENCE [LARGE SCALE MRNA]</scope>
</reference>
<reference key="5">
    <citation type="journal article" date="1997" name="Proc. Natl. Acad. Sci. U.S.A.">
        <title>Identification and classification of 16 new kinesin superfamily (KIF) proteins in mouse genome.</title>
        <authorList>
            <person name="Nakagawa T."/>
            <person name="Tanaka Y."/>
            <person name="Matsuoka E."/>
            <person name="Kondo S."/>
            <person name="Okada Y."/>
            <person name="Noda Y."/>
            <person name="Kanai Y."/>
            <person name="Hirokawa N."/>
        </authorList>
    </citation>
    <scope>NUCLEOTIDE SEQUENCE [MRNA] OF 93-157</scope>
    <source>
        <strain>ICR</strain>
    </source>
</reference>
<reference key="6">
    <citation type="journal article" date="2006" name="Mol. Cell. Proteomics">
        <title>Comprehensive identification of phosphorylation sites in postsynaptic density preparations.</title>
        <authorList>
            <person name="Trinidad J.C."/>
            <person name="Specht C.G."/>
            <person name="Thalhammer A."/>
            <person name="Schoepfer R."/>
            <person name="Burlingame A.L."/>
        </authorList>
    </citation>
    <scope>IDENTIFICATION BY MASS SPECTROMETRY [LARGE SCALE ANALYSIS]</scope>
    <source>
        <tissue>Brain</tissue>
    </source>
</reference>
<reference key="7">
    <citation type="journal article" date="2010" name="Cell">
        <title>A tissue-specific atlas of mouse protein phosphorylation and expression.</title>
        <authorList>
            <person name="Huttlin E.L."/>
            <person name="Jedrychowski M.P."/>
            <person name="Elias J.E."/>
            <person name="Goswami T."/>
            <person name="Rad R."/>
            <person name="Beausoleil S.A."/>
            <person name="Villen J."/>
            <person name="Haas W."/>
            <person name="Sowa M.E."/>
            <person name="Gygi S.P."/>
        </authorList>
    </citation>
    <scope>IDENTIFICATION BY MASS SPECTROMETRY [LARGE SCALE ANALYSIS]</scope>
    <source>
        <tissue>Brain</tissue>
    </source>
</reference>
<name>KIF3C_MOUSE</name>
<dbReference type="EMBL" id="AF013116">
    <property type="protein sequence ID" value="AAC39965.1"/>
    <property type="molecule type" value="mRNA"/>
</dbReference>
<dbReference type="EMBL" id="AK147572">
    <property type="protein sequence ID" value="BAE28002.1"/>
    <property type="molecule type" value="mRNA"/>
</dbReference>
<dbReference type="EMBL" id="CH466623">
    <property type="protein sequence ID" value="EDL01397.1"/>
    <property type="molecule type" value="Genomic_DNA"/>
</dbReference>
<dbReference type="EMBL" id="BC127063">
    <property type="protein sequence ID" value="AAI27064.1"/>
    <property type="molecule type" value="mRNA"/>
</dbReference>
<dbReference type="EMBL" id="AB001433">
    <property type="protein sequence ID" value="BAA22393.1"/>
    <property type="molecule type" value="mRNA"/>
</dbReference>
<dbReference type="CCDS" id="CCDS25783.1"/>
<dbReference type="RefSeq" id="NP_032471.2">
    <property type="nucleotide sequence ID" value="NM_008445.2"/>
</dbReference>
<dbReference type="PDB" id="5JVM">
    <property type="method" value="X-ray"/>
    <property type="resolution" value="1.57 A"/>
    <property type="chains" value="A/B=374-402"/>
</dbReference>
<dbReference type="PDBsum" id="5JVM"/>
<dbReference type="SMR" id="O35066"/>
<dbReference type="BioGRID" id="200943">
    <property type="interactions" value="19"/>
</dbReference>
<dbReference type="ComplexPortal" id="CPX-3202">
    <property type="entry name" value="KIF3 complex variant AC"/>
</dbReference>
<dbReference type="ComplexPortal" id="CPX-3205">
    <property type="entry name" value="KIF3 complex variant AC-KAP3"/>
</dbReference>
<dbReference type="FunCoup" id="O35066">
    <property type="interactions" value="487"/>
</dbReference>
<dbReference type="IntAct" id="O35066">
    <property type="interactions" value="13"/>
</dbReference>
<dbReference type="STRING" id="10090.ENSMUSP00000020999"/>
<dbReference type="GlyGen" id="O35066">
    <property type="glycosylation" value="1 site, 1 O-linked glycan (1 site)"/>
</dbReference>
<dbReference type="iPTMnet" id="O35066"/>
<dbReference type="PhosphoSitePlus" id="O35066"/>
<dbReference type="PaxDb" id="10090-ENSMUSP00000020999"/>
<dbReference type="PeptideAtlas" id="O35066"/>
<dbReference type="ProteomicsDB" id="263537"/>
<dbReference type="Pumba" id="O35066"/>
<dbReference type="Antibodypedia" id="13243">
    <property type="antibodies" value="80 antibodies from 21 providers"/>
</dbReference>
<dbReference type="DNASU" id="16570"/>
<dbReference type="Ensembl" id="ENSMUST00000020999.7">
    <property type="protein sequence ID" value="ENSMUSP00000020999.6"/>
    <property type="gene ID" value="ENSMUSG00000020668.11"/>
</dbReference>
<dbReference type="Ensembl" id="ENSMUST00000220210.2">
    <property type="protein sequence ID" value="ENSMUSP00000151286.2"/>
    <property type="gene ID" value="ENSMUSG00000020668.11"/>
</dbReference>
<dbReference type="GeneID" id="16570"/>
<dbReference type="KEGG" id="mmu:16570"/>
<dbReference type="UCSC" id="uc007mwm.1">
    <property type="organism name" value="mouse"/>
</dbReference>
<dbReference type="AGR" id="MGI:107979"/>
<dbReference type="CTD" id="3797"/>
<dbReference type="MGI" id="MGI:107979">
    <property type="gene designation" value="Kif3c"/>
</dbReference>
<dbReference type="VEuPathDB" id="HostDB:ENSMUSG00000020668"/>
<dbReference type="eggNOG" id="KOG4280">
    <property type="taxonomic scope" value="Eukaryota"/>
</dbReference>
<dbReference type="GeneTree" id="ENSGT00940000153739"/>
<dbReference type="HOGENOM" id="CLU_001485_22_4_1"/>
<dbReference type="InParanoid" id="O35066"/>
<dbReference type="OMA" id="DMIRVMK"/>
<dbReference type="OrthoDB" id="3176171at2759"/>
<dbReference type="PhylomeDB" id="O35066"/>
<dbReference type="TreeFam" id="TF105223"/>
<dbReference type="Reactome" id="R-MMU-2132295">
    <property type="pathway name" value="MHC class II antigen presentation"/>
</dbReference>
<dbReference type="Reactome" id="R-MMU-5620924">
    <property type="pathway name" value="Intraflagellar transport"/>
</dbReference>
<dbReference type="Reactome" id="R-MMU-6811434">
    <property type="pathway name" value="COPI-dependent Golgi-to-ER retrograde traffic"/>
</dbReference>
<dbReference type="Reactome" id="R-MMU-983189">
    <property type="pathway name" value="Kinesins"/>
</dbReference>
<dbReference type="BioGRID-ORCS" id="16570">
    <property type="hits" value="0 hits in 79 CRISPR screens"/>
</dbReference>
<dbReference type="ChiTaRS" id="Kif3c">
    <property type="organism name" value="mouse"/>
</dbReference>
<dbReference type="PRO" id="PR:O35066"/>
<dbReference type="Proteomes" id="UP000000589">
    <property type="component" value="Chromosome 12"/>
</dbReference>
<dbReference type="RNAct" id="O35066">
    <property type="molecule type" value="protein"/>
</dbReference>
<dbReference type="Bgee" id="ENSMUSG00000020668">
    <property type="expression patterns" value="Expressed in cortical plate and 256 other cell types or tissues"/>
</dbReference>
<dbReference type="ExpressionAtlas" id="O35066">
    <property type="expression patterns" value="baseline and differential"/>
</dbReference>
<dbReference type="GO" id="GO:0005829">
    <property type="term" value="C:cytosol"/>
    <property type="evidence" value="ECO:0000304"/>
    <property type="project" value="Reactome"/>
</dbReference>
<dbReference type="GO" id="GO:0005874">
    <property type="term" value="C:microtubule"/>
    <property type="evidence" value="ECO:0007669"/>
    <property type="project" value="UniProtKB-KW"/>
</dbReference>
<dbReference type="GO" id="GO:0015630">
    <property type="term" value="C:microtubule cytoskeleton"/>
    <property type="evidence" value="ECO:0000266"/>
    <property type="project" value="MGI"/>
</dbReference>
<dbReference type="GO" id="GO:0043025">
    <property type="term" value="C:neuronal cell body"/>
    <property type="evidence" value="ECO:0000266"/>
    <property type="project" value="MGI"/>
</dbReference>
<dbReference type="GO" id="GO:0071598">
    <property type="term" value="C:neuronal ribonucleoprotein granule"/>
    <property type="evidence" value="ECO:0000266"/>
    <property type="project" value="MGI"/>
</dbReference>
<dbReference type="GO" id="GO:0005524">
    <property type="term" value="F:ATP binding"/>
    <property type="evidence" value="ECO:0007669"/>
    <property type="project" value="UniProtKB-KW"/>
</dbReference>
<dbReference type="GO" id="GO:0008017">
    <property type="term" value="F:microtubule binding"/>
    <property type="evidence" value="ECO:0007669"/>
    <property type="project" value="InterPro"/>
</dbReference>
<dbReference type="GO" id="GO:0003777">
    <property type="term" value="F:microtubule motor activity"/>
    <property type="evidence" value="ECO:0007669"/>
    <property type="project" value="InterPro"/>
</dbReference>
<dbReference type="GO" id="GO:0007018">
    <property type="term" value="P:microtubule-based movement"/>
    <property type="evidence" value="ECO:0007669"/>
    <property type="project" value="InterPro"/>
</dbReference>
<dbReference type="CDD" id="cd01371">
    <property type="entry name" value="KISc_KIF3"/>
    <property type="match status" value="1"/>
</dbReference>
<dbReference type="Gene3D" id="3.40.850.10">
    <property type="entry name" value="Kinesin motor domain"/>
    <property type="match status" value="1"/>
</dbReference>
<dbReference type="InterPro" id="IPR027640">
    <property type="entry name" value="Kinesin-like_fam"/>
</dbReference>
<dbReference type="InterPro" id="IPR019821">
    <property type="entry name" value="Kinesin_motor_CS"/>
</dbReference>
<dbReference type="InterPro" id="IPR001752">
    <property type="entry name" value="Kinesin_motor_dom"/>
</dbReference>
<dbReference type="InterPro" id="IPR036961">
    <property type="entry name" value="Kinesin_motor_dom_sf"/>
</dbReference>
<dbReference type="InterPro" id="IPR027417">
    <property type="entry name" value="P-loop_NTPase"/>
</dbReference>
<dbReference type="PANTHER" id="PTHR47968">
    <property type="entry name" value="CENTROMERE PROTEIN E"/>
    <property type="match status" value="1"/>
</dbReference>
<dbReference type="PANTHER" id="PTHR47968:SF76">
    <property type="entry name" value="KINESIN-LIKE PROTEIN"/>
    <property type="match status" value="1"/>
</dbReference>
<dbReference type="Pfam" id="PF00225">
    <property type="entry name" value="Kinesin"/>
    <property type="match status" value="2"/>
</dbReference>
<dbReference type="PRINTS" id="PR00380">
    <property type="entry name" value="KINESINHEAVY"/>
</dbReference>
<dbReference type="SMART" id="SM00129">
    <property type="entry name" value="KISc"/>
    <property type="match status" value="1"/>
</dbReference>
<dbReference type="SUPFAM" id="SSF52540">
    <property type="entry name" value="P-loop containing nucleoside triphosphate hydrolases"/>
    <property type="match status" value="1"/>
</dbReference>
<dbReference type="PROSITE" id="PS00411">
    <property type="entry name" value="KINESIN_MOTOR_1"/>
    <property type="match status" value="1"/>
</dbReference>
<dbReference type="PROSITE" id="PS50067">
    <property type="entry name" value="KINESIN_MOTOR_2"/>
    <property type="match status" value="1"/>
</dbReference>
<accession>O35066</accession>
<accession>O35229</accession>
<accession>Q3UH55</accession>
<keyword id="KW-0002">3D-structure</keyword>
<keyword id="KW-0067">ATP-binding</keyword>
<keyword id="KW-0175">Coiled coil</keyword>
<keyword id="KW-0963">Cytoplasm</keyword>
<keyword id="KW-0206">Cytoskeleton</keyword>
<keyword id="KW-0493">Microtubule</keyword>
<keyword id="KW-0505">Motor protein</keyword>
<keyword id="KW-0547">Nucleotide-binding</keyword>
<keyword id="KW-1185">Reference proteome</keyword>
<feature type="chain" id="PRO_0000125398" description="Kinesin-like protein KIF3C">
    <location>
        <begin position="1"/>
        <end position="796"/>
    </location>
</feature>
<feature type="domain" description="Kinesin motor" evidence="3">
    <location>
        <begin position="10"/>
        <end position="367"/>
    </location>
</feature>
<feature type="region of interest" description="Disordered" evidence="4">
    <location>
        <begin position="252"/>
        <end position="292"/>
    </location>
</feature>
<feature type="region of interest" description="Disordered" evidence="4">
    <location>
        <begin position="397"/>
        <end position="422"/>
    </location>
</feature>
<feature type="region of interest" description="Globular" evidence="2">
    <location>
        <begin position="633"/>
        <end position="793"/>
    </location>
</feature>
<feature type="region of interest" description="Disordered" evidence="4">
    <location>
        <begin position="758"/>
        <end position="796"/>
    </location>
</feature>
<feature type="coiled-coil region" evidence="2">
    <location>
        <begin position="378"/>
        <end position="632"/>
    </location>
</feature>
<feature type="compositionally biased region" description="Low complexity" evidence="4">
    <location>
        <begin position="256"/>
        <end position="269"/>
    </location>
</feature>
<feature type="compositionally biased region" description="Basic residues" evidence="4">
    <location>
        <begin position="401"/>
        <end position="416"/>
    </location>
</feature>
<feature type="binding site" evidence="3">
    <location>
        <begin position="97"/>
        <end position="104"/>
    </location>
    <ligand>
        <name>ATP</name>
        <dbReference type="ChEBI" id="CHEBI:30616"/>
    </ligand>
</feature>
<feature type="sequence conflict" description="In Ref. 4; BAA22393." evidence="5" ref="4">
    <original>V</original>
    <variation>I</variation>
    <location>
        <position position="93"/>
    </location>
</feature>
<feature type="sequence conflict" description="In Ref. 1; AAC39965." evidence="5" ref="1">
    <original>L</original>
    <variation>V</variation>
    <location>
        <position position="564"/>
    </location>
</feature>
<feature type="helix" evidence="6">
    <location>
        <begin position="377"/>
        <end position="402"/>
    </location>
</feature>
<gene>
    <name type="primary">Kif3c</name>
</gene>
<sequence>MASKTKASEALKVVARCRPLSRKEEAAGHEQILTMDVKLGQVTLRNPRAAPGELPKTFTFDAVYDASSKQADLYDETVRPLIDSVLQGFNGTVFAYGQTGTGKTYTMQGTWVEPELRGVIPNAFEHIFTHISRSQNQQYLVRASYLEIYQEEIRDLLSKEPGKRLELKENPETGVYIKDLSSFVTKNVKEIEHVMNLGNQARAVGSTHMNEVSSRSHAIFVITVECSERGSDGQDHIRVGKLNLVDLAGSERQNKAGPNAAGGPATQPTAGGGSGSGSASGSASSGERPKEASKINLSLSALGNVIAALAGNRSTHIPYRDSKLTRLLQDSLGGNAKTIMVATLGPASHSYDESLSTLRFANRAKNIKNKPRVNEDPKDTLLREFQEEIARLKAQLEKKGMLGKRPRRKSSRRKKAVSAPAGYPEGSVIEAWVAEEEDDNNNNHHPPQPILEAALEKNMENYLQDQKERLEEEKAAIQDDRSLVSEEKQKLLEEKEKMLEDLRREQQATELLAAKYKAMESKLLIGGRNIMDHTNEQQKMLELKRQEIAEQKRREREMQQEMLLRDEETMELRGTYSSLQQEVEVKTKKLKKLYAKLQAVKAEIQDQHEEYIRVRQDLEEAQNEQTRELKLKYLIIENFIPPEEKNKIMNRLFLDCEEEQWRFQPLVPAGVNNSQMKKRPTSAVGYKRPISQYARVAMAMGSHPRYRAENIMFLELDVSPPAIFEMEFSHDQEQDPRVLHMERLMRLDSFLERPSTTKVRKSRSWCQSPQRMPPPSTAHASMTSVPLHPATVVDHD</sequence>
<proteinExistence type="evidence at protein level"/>
<comment type="function">
    <text evidence="1">Microtubule-based anterograde translocator for membranous organelles.</text>
</comment>
<comment type="subunit">
    <text evidence="1">Heterodimer of KIF3A and KIF3C.</text>
</comment>
<comment type="subcellular location">
    <subcellularLocation>
        <location evidence="5">Cytoplasm</location>
        <location evidence="5">Cytoskeleton</location>
    </subcellularLocation>
</comment>
<comment type="similarity">
    <text evidence="3">Belongs to the TRAFAC class myosin-kinesin ATPase superfamily. Kinesin family. Kinesin II subfamily.</text>
</comment>
<evidence type="ECO:0000250" key="1"/>
<evidence type="ECO:0000255" key="2"/>
<evidence type="ECO:0000255" key="3">
    <source>
        <dbReference type="PROSITE-ProRule" id="PRU00283"/>
    </source>
</evidence>
<evidence type="ECO:0000256" key="4">
    <source>
        <dbReference type="SAM" id="MobiDB-lite"/>
    </source>
</evidence>
<evidence type="ECO:0000305" key="5"/>
<evidence type="ECO:0007829" key="6">
    <source>
        <dbReference type="PDB" id="5JVM"/>
    </source>
</evidence>